<comment type="function">
    <text evidence="3">Polyprenyl transferase; part of the cluster A that mediates the biosynthesis of chevalone E and its oxidized derivatives that possess a unique five-membered lactone ring and can synergistically enhance the cytotoxicity of doxorubicin (DOX) in breast cancer cells (Ref.1). Within the pathway, cle5 takes part to the biosynthesis of the molecular scaffold by catalyzing the C-3 geranylgeranylation reaction of triacetic acid lactone (TAL) produced by cle1 (Ref.1). The molecular scaffold is commonly biosynthesized by a series of enzymes including the non-reducing polyketide synthase (NR-PKS) cle1 that produces the alpha-pyrone triacetic acid lactone (TAL); The membrane-bound prenyltransferase cle5 that accepts TAL as its substrate to perform a C-3 geranylgeranylation reaction, in which the pathway-dedicated GGPS cle6 is required to provide GGPP, the other substrate of cle5; the FAD-dependent monooxygenase Cle3 that forms an (S)-epoxide ring at the terminal olefin of the geranylgeranyl group; and the terpene cyclase Cle7 that catalyzes the cyclization of the prenyl group that yields the pentacyclic pathway intermediate chevalone E (Ref.1). Chevalone E can derivatize into seven new oxidized analogs by the cytochrome P450 monooxygenases cle2 (acting at C-20) and cle4 (acting at C-11 and C-12) (Ref.1).</text>
</comment>
<comment type="cofactor">
    <cofactor evidence="1">
        <name>Mg(2+)</name>
        <dbReference type="ChEBI" id="CHEBI:18420"/>
    </cofactor>
</comment>
<comment type="pathway">
    <text evidence="3">Secondary metabolite biosynthesis; terpenoid biosynthesis.</text>
</comment>
<comment type="subcellular location">
    <subcellularLocation>
        <location evidence="2">Membrane</location>
        <topology evidence="2">Multi-pass membrane protein</topology>
    </subcellularLocation>
</comment>
<comment type="biotechnology">
    <text evidence="3">Chevalone E derivatives produced by this cluster are interesting candidates for cancer therapy since they synergistically enhance the cytotoxicity of doxorubicin (DOX) in both MDA-MB-231 and MCF-7 breast cancer cell lines.</text>
</comment>
<comment type="similarity">
    <text evidence="5">Belongs to the UbiA prenyltransferase family.</text>
</comment>
<keyword id="KW-0472">Membrane</keyword>
<keyword id="KW-0808">Transferase</keyword>
<keyword id="KW-0812">Transmembrane</keyword>
<keyword id="KW-1133">Transmembrane helix</keyword>
<dbReference type="EC" id="2.5.1.-" evidence="3"/>
<dbReference type="EMBL" id="LC422695">
    <property type="protein sequence ID" value="BBG28475.1"/>
    <property type="molecule type" value="Genomic_DNA"/>
</dbReference>
<dbReference type="SMR" id="A0A3T0ZHL4"/>
<dbReference type="VEuPathDB" id="FungiDB:ASPVEDRAFT_158013"/>
<dbReference type="UniPathway" id="UPA00213"/>
<dbReference type="GO" id="GO:0005886">
    <property type="term" value="C:plasma membrane"/>
    <property type="evidence" value="ECO:0007669"/>
    <property type="project" value="TreeGrafter"/>
</dbReference>
<dbReference type="GO" id="GO:0016765">
    <property type="term" value="F:transferase activity, transferring alkyl or aryl (other than methyl) groups"/>
    <property type="evidence" value="ECO:0007669"/>
    <property type="project" value="InterPro"/>
</dbReference>
<dbReference type="GO" id="GO:0016114">
    <property type="term" value="P:terpenoid biosynthetic process"/>
    <property type="evidence" value="ECO:0007669"/>
    <property type="project" value="UniProtKB-UniPathway"/>
</dbReference>
<dbReference type="CDD" id="cd13959">
    <property type="entry name" value="PT_UbiA_COQ2"/>
    <property type="match status" value="1"/>
</dbReference>
<dbReference type="FunFam" id="1.10.357.140:FF:000008">
    <property type="entry name" value="4-hydroxybenzoate octaprenyltransferase"/>
    <property type="match status" value="1"/>
</dbReference>
<dbReference type="FunFam" id="1.20.120.1780:FF:000001">
    <property type="entry name" value="4-hydroxybenzoate octaprenyltransferase"/>
    <property type="match status" value="1"/>
</dbReference>
<dbReference type="Gene3D" id="1.10.357.140">
    <property type="entry name" value="UbiA prenyltransferase"/>
    <property type="match status" value="1"/>
</dbReference>
<dbReference type="Gene3D" id="1.20.120.1780">
    <property type="entry name" value="UbiA prenyltransferase"/>
    <property type="match status" value="1"/>
</dbReference>
<dbReference type="InterPro" id="IPR039653">
    <property type="entry name" value="Prenyltransferase"/>
</dbReference>
<dbReference type="InterPro" id="IPR000537">
    <property type="entry name" value="UbiA_prenyltransferase"/>
</dbReference>
<dbReference type="InterPro" id="IPR030470">
    <property type="entry name" value="UbiA_prenylTrfase_CS"/>
</dbReference>
<dbReference type="InterPro" id="IPR044878">
    <property type="entry name" value="UbiA_sf"/>
</dbReference>
<dbReference type="PANTHER" id="PTHR11048:SF28">
    <property type="entry name" value="4-HYDROXYBENZOATE POLYPRENYLTRANSFERASE, MITOCHONDRIAL"/>
    <property type="match status" value="1"/>
</dbReference>
<dbReference type="PANTHER" id="PTHR11048">
    <property type="entry name" value="PRENYLTRANSFERASES"/>
    <property type="match status" value="1"/>
</dbReference>
<dbReference type="Pfam" id="PF01040">
    <property type="entry name" value="UbiA"/>
    <property type="match status" value="1"/>
</dbReference>
<dbReference type="PROSITE" id="PS00943">
    <property type="entry name" value="UBIA"/>
    <property type="match status" value="1"/>
</dbReference>
<proteinExistence type="evidence at protein level"/>
<organism>
    <name type="scientific">Aspergillus versicolor</name>
    <dbReference type="NCBI Taxonomy" id="46472"/>
    <lineage>
        <taxon>Eukaryota</taxon>
        <taxon>Fungi</taxon>
        <taxon>Dikarya</taxon>
        <taxon>Ascomycota</taxon>
        <taxon>Pezizomycotina</taxon>
        <taxon>Eurotiomycetes</taxon>
        <taxon>Eurotiomycetidae</taxon>
        <taxon>Eurotiales</taxon>
        <taxon>Aspergillaceae</taxon>
        <taxon>Aspergillus</taxon>
        <taxon>Aspergillus subgen. Nidulantes</taxon>
    </lineage>
</organism>
<evidence type="ECO:0000250" key="1">
    <source>
        <dbReference type="UniProtKB" id="P32378"/>
    </source>
</evidence>
<evidence type="ECO:0000255" key="2"/>
<evidence type="ECO:0000269" key="3">
    <source ref="1"/>
</evidence>
<evidence type="ECO:0000303" key="4">
    <source ref="1"/>
</evidence>
<evidence type="ECO:0000305" key="5"/>
<feature type="chain" id="PRO_0000461046" description="Polyprenyl transferase cle5">
    <location>
        <begin position="1"/>
        <end position="321"/>
    </location>
</feature>
<feature type="transmembrane region" description="Helical" evidence="2">
    <location>
        <begin position="26"/>
        <end position="46"/>
    </location>
</feature>
<feature type="transmembrane region" description="Helical" evidence="2">
    <location>
        <begin position="57"/>
        <end position="77"/>
    </location>
</feature>
<feature type="transmembrane region" description="Helical" evidence="2">
    <location>
        <begin position="107"/>
        <end position="127"/>
    </location>
</feature>
<feature type="transmembrane region" description="Helical" evidence="2">
    <location>
        <begin position="132"/>
        <end position="149"/>
    </location>
</feature>
<feature type="transmembrane region" description="Helical" evidence="2">
    <location>
        <begin position="159"/>
        <end position="179"/>
    </location>
</feature>
<feature type="transmembrane region" description="Helical" evidence="2">
    <location>
        <begin position="189"/>
        <end position="209"/>
    </location>
</feature>
<feature type="transmembrane region" description="Helical" evidence="2">
    <location>
        <begin position="232"/>
        <end position="252"/>
    </location>
</feature>
<feature type="transmembrane region" description="Helical" evidence="2">
    <location>
        <begin position="262"/>
        <end position="282"/>
    </location>
</feature>
<feature type="transmembrane region" description="Helical" evidence="2">
    <location>
        <begin position="300"/>
        <end position="320"/>
    </location>
</feature>
<protein>
    <recommendedName>
        <fullName evidence="4">Polyprenyl transferase cle5</fullName>
        <ecNumber evidence="3">2.5.1.-</ecNumber>
    </recommendedName>
    <alternativeName>
        <fullName evidence="4">Chevalone E biosynthesis cluster protein 5</fullName>
    </alternativeName>
</protein>
<accession>A0A3T0ZHL4</accession>
<gene>
    <name evidence="4" type="primary">cle5</name>
</gene>
<sequence length="321" mass="36101">MTYKQRNTNQLAIDLITLSRFNRYNPLLATFSGVWATILAGSHKITHSPNSVTSEYVLSQALLCFICSFVFCGAGMVWNDWIDLHIDRQVARTKGRPLARGAVTTSEALVWMAFQFISSWVLVSWMLEGENVQAAMLPVTLSTILYPFAKRPIFRRLHIYPQYLLGFTLAYPSLIGTLAIKPEGNAQPLWASINQSLPMFVTVFTWTLYLNTAYSYQDVVDDQKMNVNSAYVLAGSYIHHLLVVLAVLVLGAVGWQLYGQESQWLWGGWMGVWTWSFLGQLVRFDKSRPESGGPLHKENFALGVWTVFVCVVELLIGGNGC</sequence>
<name>CLE5_ASPVE</name>
<reference key="1">
    <citation type="journal article" date="2019" name="Org. Chem. Front.">
        <title>Genome mining for fungal polyketide-diterpenoid hybrids: discovery of key terpene cyclases and multifunctional P450s for structural diversification.</title>
        <authorList>
            <person name="Wang W.G."/>
            <person name="Du L.Q."/>
            <person name="Sheng S.L."/>
            <person name="Li A."/>
            <person name="Li Y.P."/>
            <person name="Cheng G.G."/>
            <person name="Li G.P."/>
            <person name="Sun G."/>
            <person name="Hu Q."/>
            <person name="Matsuda Y."/>
        </authorList>
    </citation>
    <scope>NUCLEOTIDE SEQUENCE [GENOMIC DNA]</scope>
    <scope>FUNCTION</scope>
    <scope>CATALYTIC ACTIVITY</scope>
    <scope>PATHWAY</scope>
    <scope>BIOTECHNOLOGY</scope>
    <source>
        <strain>0312</strain>
    </source>
</reference>